<gene>
    <name type="ORF">DDB_G0287413</name>
</gene>
<accession>Q54KC7</accession>
<feature type="chain" id="PRO_0000347025" description="Putative uncharacterized protein DDB_G0287413">
    <location>
        <begin position="1"/>
        <end position="221"/>
    </location>
</feature>
<feature type="region of interest" description="Disordered" evidence="1">
    <location>
        <begin position="1"/>
        <end position="28"/>
    </location>
</feature>
<feature type="region of interest" description="Disordered" evidence="1">
    <location>
        <begin position="140"/>
        <end position="205"/>
    </location>
</feature>
<feature type="compositionally biased region" description="Low complexity" evidence="1">
    <location>
        <begin position="1"/>
        <end position="27"/>
    </location>
</feature>
<feature type="compositionally biased region" description="Low complexity" evidence="1">
    <location>
        <begin position="140"/>
        <end position="162"/>
    </location>
</feature>
<proteinExistence type="predicted"/>
<evidence type="ECO:0000256" key="1">
    <source>
        <dbReference type="SAM" id="MobiDB-lite"/>
    </source>
</evidence>
<reference key="1">
    <citation type="journal article" date="2005" name="Nature">
        <title>The genome of the social amoeba Dictyostelium discoideum.</title>
        <authorList>
            <person name="Eichinger L."/>
            <person name="Pachebat J.A."/>
            <person name="Gloeckner G."/>
            <person name="Rajandream M.A."/>
            <person name="Sucgang R."/>
            <person name="Berriman M."/>
            <person name="Song J."/>
            <person name="Olsen R."/>
            <person name="Szafranski K."/>
            <person name="Xu Q."/>
            <person name="Tunggal B."/>
            <person name="Kummerfeld S."/>
            <person name="Madera M."/>
            <person name="Konfortov B.A."/>
            <person name="Rivero F."/>
            <person name="Bankier A.T."/>
            <person name="Lehmann R."/>
            <person name="Hamlin N."/>
            <person name="Davies R."/>
            <person name="Gaudet P."/>
            <person name="Fey P."/>
            <person name="Pilcher K."/>
            <person name="Chen G."/>
            <person name="Saunders D."/>
            <person name="Sodergren E.J."/>
            <person name="Davis P."/>
            <person name="Kerhornou A."/>
            <person name="Nie X."/>
            <person name="Hall N."/>
            <person name="Anjard C."/>
            <person name="Hemphill L."/>
            <person name="Bason N."/>
            <person name="Farbrother P."/>
            <person name="Desany B."/>
            <person name="Just E."/>
            <person name="Morio T."/>
            <person name="Rost R."/>
            <person name="Churcher C.M."/>
            <person name="Cooper J."/>
            <person name="Haydock S."/>
            <person name="van Driessche N."/>
            <person name="Cronin A."/>
            <person name="Goodhead I."/>
            <person name="Muzny D.M."/>
            <person name="Mourier T."/>
            <person name="Pain A."/>
            <person name="Lu M."/>
            <person name="Harper D."/>
            <person name="Lindsay R."/>
            <person name="Hauser H."/>
            <person name="James K.D."/>
            <person name="Quiles M."/>
            <person name="Madan Babu M."/>
            <person name="Saito T."/>
            <person name="Buchrieser C."/>
            <person name="Wardroper A."/>
            <person name="Felder M."/>
            <person name="Thangavelu M."/>
            <person name="Johnson D."/>
            <person name="Knights A."/>
            <person name="Loulseged H."/>
            <person name="Mungall K.L."/>
            <person name="Oliver K."/>
            <person name="Price C."/>
            <person name="Quail M.A."/>
            <person name="Urushihara H."/>
            <person name="Hernandez J."/>
            <person name="Rabbinowitsch E."/>
            <person name="Steffen D."/>
            <person name="Sanders M."/>
            <person name="Ma J."/>
            <person name="Kohara Y."/>
            <person name="Sharp S."/>
            <person name="Simmonds M.N."/>
            <person name="Spiegler S."/>
            <person name="Tivey A."/>
            <person name="Sugano S."/>
            <person name="White B."/>
            <person name="Walker D."/>
            <person name="Woodward J.R."/>
            <person name="Winckler T."/>
            <person name="Tanaka Y."/>
            <person name="Shaulsky G."/>
            <person name="Schleicher M."/>
            <person name="Weinstock G.M."/>
            <person name="Rosenthal A."/>
            <person name="Cox E.C."/>
            <person name="Chisholm R.L."/>
            <person name="Gibbs R.A."/>
            <person name="Loomis W.F."/>
            <person name="Platzer M."/>
            <person name="Kay R.R."/>
            <person name="Williams J.G."/>
            <person name="Dear P.H."/>
            <person name="Noegel A.A."/>
            <person name="Barrell B.G."/>
            <person name="Kuspa A."/>
        </authorList>
    </citation>
    <scope>NUCLEOTIDE SEQUENCE [LARGE SCALE GENOMIC DNA]</scope>
    <source>
        <strain>AX4</strain>
    </source>
</reference>
<organism>
    <name type="scientific">Dictyostelium discoideum</name>
    <name type="common">Social amoeba</name>
    <dbReference type="NCBI Taxonomy" id="44689"/>
    <lineage>
        <taxon>Eukaryota</taxon>
        <taxon>Amoebozoa</taxon>
        <taxon>Evosea</taxon>
        <taxon>Eumycetozoa</taxon>
        <taxon>Dictyostelia</taxon>
        <taxon>Dictyosteliales</taxon>
        <taxon>Dictyosteliaceae</taxon>
        <taxon>Dictyostelium</taxon>
    </lineage>
</organism>
<dbReference type="EMBL" id="AAFI02000100">
    <property type="protein sequence ID" value="EAL63774.1"/>
    <property type="molecule type" value="Genomic_DNA"/>
</dbReference>
<dbReference type="RefSeq" id="XP_637296.1">
    <property type="nucleotide sequence ID" value="XM_632204.1"/>
</dbReference>
<dbReference type="SMR" id="Q54KC7"/>
<dbReference type="PaxDb" id="44689-DDB0187475"/>
<dbReference type="EnsemblProtists" id="EAL63774">
    <property type="protein sequence ID" value="EAL63774"/>
    <property type="gene ID" value="DDB_G0287413"/>
</dbReference>
<dbReference type="GeneID" id="8626129"/>
<dbReference type="KEGG" id="ddi:DDB_G0287413"/>
<dbReference type="dictyBase" id="DDB_G0287413"/>
<dbReference type="VEuPathDB" id="AmoebaDB:DDB_G0287413"/>
<dbReference type="HOGENOM" id="CLU_1252641_0_0_1"/>
<dbReference type="InParanoid" id="Q54KC7"/>
<dbReference type="PRO" id="PR:Q54KC7"/>
<dbReference type="Proteomes" id="UP000002195">
    <property type="component" value="Chromosome 5"/>
</dbReference>
<sequence length="221" mass="25413">MNNNNNNNNNNNNNNNNNNNNNNNNNNEEIKFNLNINEEKDDEIKDLYKVIESLKKELFEKYKENLLLKENLDQEIEFNKVLKFGMFEKNKEFEILATQLGILKSKYGNKKCDIEVIIISSDDEDDDNKNKNQLKDITTTTTSSTTTTTTTTSTTTTNNSSSENNFDDQNKEEVVFCKPYNQSDNDEDSKNNSKDLGYNENNIGGDATVGEYNSYVVKKEM</sequence>
<keyword id="KW-1185">Reference proteome</keyword>
<protein>
    <recommendedName>
        <fullName>Putative uncharacterized protein DDB_G0287413</fullName>
    </recommendedName>
</protein>
<name>Y7475_DICDI</name>